<protein>
    <recommendedName>
        <fullName evidence="1">Large ribosomal subunit protein uL4</fullName>
    </recommendedName>
    <alternativeName>
        <fullName evidence="3">50S ribosomal protein L4</fullName>
    </alternativeName>
</protein>
<organism>
    <name type="scientific">Xylella fastidiosa (strain M23)</name>
    <dbReference type="NCBI Taxonomy" id="405441"/>
    <lineage>
        <taxon>Bacteria</taxon>
        <taxon>Pseudomonadati</taxon>
        <taxon>Pseudomonadota</taxon>
        <taxon>Gammaproteobacteria</taxon>
        <taxon>Lysobacterales</taxon>
        <taxon>Lysobacteraceae</taxon>
        <taxon>Xylella</taxon>
    </lineage>
</organism>
<evidence type="ECO:0000255" key="1">
    <source>
        <dbReference type="HAMAP-Rule" id="MF_01328"/>
    </source>
</evidence>
<evidence type="ECO:0000256" key="2">
    <source>
        <dbReference type="SAM" id="MobiDB-lite"/>
    </source>
</evidence>
<evidence type="ECO:0000305" key="3"/>
<feature type="chain" id="PRO_1000142209" description="Large ribosomal subunit protein uL4">
    <location>
        <begin position="1"/>
        <end position="202"/>
    </location>
</feature>
<feature type="region of interest" description="Disordered" evidence="2">
    <location>
        <begin position="42"/>
        <end position="70"/>
    </location>
</feature>
<feature type="compositionally biased region" description="Polar residues" evidence="2">
    <location>
        <begin position="42"/>
        <end position="52"/>
    </location>
</feature>
<gene>
    <name evidence="1" type="primary">rplD</name>
    <name type="ordered locus">XfasM23_0434</name>
</gene>
<dbReference type="EMBL" id="CP001011">
    <property type="protein sequence ID" value="ACB91881.1"/>
    <property type="molecule type" value="Genomic_DNA"/>
</dbReference>
<dbReference type="RefSeq" id="WP_004090094.1">
    <property type="nucleotide sequence ID" value="NC_010577.1"/>
</dbReference>
<dbReference type="SMR" id="B2I8H0"/>
<dbReference type="KEGG" id="xfn:XfasM23_0434"/>
<dbReference type="HOGENOM" id="CLU_041575_5_2_6"/>
<dbReference type="Proteomes" id="UP000001698">
    <property type="component" value="Chromosome"/>
</dbReference>
<dbReference type="GO" id="GO:1990904">
    <property type="term" value="C:ribonucleoprotein complex"/>
    <property type="evidence" value="ECO:0007669"/>
    <property type="project" value="UniProtKB-KW"/>
</dbReference>
<dbReference type="GO" id="GO:0005840">
    <property type="term" value="C:ribosome"/>
    <property type="evidence" value="ECO:0007669"/>
    <property type="project" value="UniProtKB-KW"/>
</dbReference>
<dbReference type="GO" id="GO:0019843">
    <property type="term" value="F:rRNA binding"/>
    <property type="evidence" value="ECO:0007669"/>
    <property type="project" value="UniProtKB-UniRule"/>
</dbReference>
<dbReference type="GO" id="GO:0003735">
    <property type="term" value="F:structural constituent of ribosome"/>
    <property type="evidence" value="ECO:0007669"/>
    <property type="project" value="InterPro"/>
</dbReference>
<dbReference type="GO" id="GO:0006412">
    <property type="term" value="P:translation"/>
    <property type="evidence" value="ECO:0007669"/>
    <property type="project" value="UniProtKB-UniRule"/>
</dbReference>
<dbReference type="Gene3D" id="3.40.1370.10">
    <property type="match status" value="1"/>
</dbReference>
<dbReference type="HAMAP" id="MF_01328_B">
    <property type="entry name" value="Ribosomal_uL4_B"/>
    <property type="match status" value="1"/>
</dbReference>
<dbReference type="InterPro" id="IPR002136">
    <property type="entry name" value="Ribosomal_uL4"/>
</dbReference>
<dbReference type="InterPro" id="IPR013005">
    <property type="entry name" value="Ribosomal_uL4-like"/>
</dbReference>
<dbReference type="InterPro" id="IPR023574">
    <property type="entry name" value="Ribosomal_uL4_dom_sf"/>
</dbReference>
<dbReference type="NCBIfam" id="TIGR03953">
    <property type="entry name" value="rplD_bact"/>
    <property type="match status" value="1"/>
</dbReference>
<dbReference type="PANTHER" id="PTHR10746">
    <property type="entry name" value="50S RIBOSOMAL PROTEIN L4"/>
    <property type="match status" value="1"/>
</dbReference>
<dbReference type="PANTHER" id="PTHR10746:SF6">
    <property type="entry name" value="LARGE RIBOSOMAL SUBUNIT PROTEIN UL4M"/>
    <property type="match status" value="1"/>
</dbReference>
<dbReference type="Pfam" id="PF00573">
    <property type="entry name" value="Ribosomal_L4"/>
    <property type="match status" value="1"/>
</dbReference>
<dbReference type="SUPFAM" id="SSF52166">
    <property type="entry name" value="Ribosomal protein L4"/>
    <property type="match status" value="1"/>
</dbReference>
<name>RL4_XYLF2</name>
<sequence length="202" mass="21694">MDLTIVGSDNTLPVSDVVFGREFSEALVHQVVVAYRNTARSGTKAQKSRSQVSGTTKKSKKQKGGGARHGALTAPIFVGGGVAFAAKPRSFSQKVNRKQYRSAICSIFSELNRQGRLKVVDAFDVEVSKTRVFAEKIKSLEVVGSSLLIVSDEISECLSLSSRNLPCVDVRSVQALDPVALVGSDVVVLTVGAVKKIEEWLV</sequence>
<comment type="function">
    <text evidence="1">One of the primary rRNA binding proteins, this protein initially binds near the 5'-end of the 23S rRNA. It is important during the early stages of 50S assembly. It makes multiple contacts with different domains of the 23S rRNA in the assembled 50S subunit and ribosome.</text>
</comment>
<comment type="function">
    <text evidence="1">Forms part of the polypeptide exit tunnel.</text>
</comment>
<comment type="subunit">
    <text evidence="1">Part of the 50S ribosomal subunit.</text>
</comment>
<comment type="similarity">
    <text evidence="1">Belongs to the universal ribosomal protein uL4 family.</text>
</comment>
<reference key="1">
    <citation type="journal article" date="2010" name="J. Bacteriol.">
        <title>Whole genome sequences of two Xylella fastidiosa strains (M12 and M23) causing almond leaf scorch disease in California.</title>
        <authorList>
            <person name="Chen J."/>
            <person name="Xie G."/>
            <person name="Han S."/>
            <person name="Chertkov O."/>
            <person name="Sims D."/>
            <person name="Civerolo E.L."/>
        </authorList>
    </citation>
    <scope>NUCLEOTIDE SEQUENCE [LARGE SCALE GENOMIC DNA]</scope>
    <source>
        <strain>M23</strain>
    </source>
</reference>
<keyword id="KW-0687">Ribonucleoprotein</keyword>
<keyword id="KW-0689">Ribosomal protein</keyword>
<keyword id="KW-0694">RNA-binding</keyword>
<keyword id="KW-0699">rRNA-binding</keyword>
<proteinExistence type="inferred from homology"/>
<accession>B2I8H0</accession>